<name>Y1304_SYNY3</name>
<gene>
    <name type="ordered locus">sll1304</name>
</gene>
<evidence type="ECO:0000250" key="1">
    <source>
        <dbReference type="UniProtKB" id="C1KKR1"/>
    </source>
</evidence>
<evidence type="ECO:0000250" key="2">
    <source>
        <dbReference type="UniProtKB" id="Q9WYP7"/>
    </source>
</evidence>
<evidence type="ECO:0000305" key="3"/>
<feature type="chain" id="PRO_0000209113" description="Probable ketose 3-epimerase">
    <location>
        <begin position="1"/>
        <end position="287"/>
    </location>
</feature>
<feature type="active site" description="Proton donor/acceptor" evidence="2">
    <location>
        <position position="152"/>
    </location>
</feature>
<feature type="active site" description="Proton donor/acceptor" evidence="2">
    <location>
        <position position="246"/>
    </location>
</feature>
<feature type="binding site" evidence="2">
    <location>
        <position position="152"/>
    </location>
    <ligand>
        <name>Mn(2+)</name>
        <dbReference type="ChEBI" id="CHEBI:29035"/>
    </ligand>
</feature>
<feature type="binding site" evidence="2">
    <location>
        <position position="185"/>
    </location>
    <ligand>
        <name>Mn(2+)</name>
        <dbReference type="ChEBI" id="CHEBI:29035"/>
    </ligand>
</feature>
<feature type="binding site" evidence="2">
    <location>
        <position position="188"/>
    </location>
    <ligand>
        <name>substrate</name>
    </ligand>
</feature>
<feature type="binding site" evidence="2">
    <location>
        <position position="211"/>
    </location>
    <ligand>
        <name>Mn(2+)</name>
        <dbReference type="ChEBI" id="CHEBI:29035"/>
    </ligand>
</feature>
<feature type="binding site" evidence="2">
    <location>
        <position position="217"/>
    </location>
    <ligand>
        <name>substrate</name>
    </ligand>
</feature>
<feature type="binding site" evidence="2">
    <location>
        <position position="246"/>
    </location>
    <ligand>
        <name>Mn(2+)</name>
        <dbReference type="ChEBI" id="CHEBI:29035"/>
    </ligand>
</feature>
<accession>P73599</accession>
<protein>
    <recommendedName>
        <fullName evidence="3">Probable ketose 3-epimerase</fullName>
        <ecNumber evidence="3">5.1.3.-</ecNumber>
    </recommendedName>
</protein>
<proteinExistence type="inferred from homology"/>
<dbReference type="EC" id="5.1.3.-" evidence="3"/>
<dbReference type="EMBL" id="BA000022">
    <property type="protein sequence ID" value="BAA17643.1"/>
    <property type="molecule type" value="Genomic_DNA"/>
</dbReference>
<dbReference type="PIR" id="S77309">
    <property type="entry name" value="S77309"/>
</dbReference>
<dbReference type="SMR" id="P73599"/>
<dbReference type="IntAct" id="P73599">
    <property type="interactions" value="1"/>
</dbReference>
<dbReference type="STRING" id="1148.gene:10498510"/>
<dbReference type="PaxDb" id="1148-1652723"/>
<dbReference type="EnsemblBacteria" id="BAA17643">
    <property type="protein sequence ID" value="BAA17643"/>
    <property type="gene ID" value="BAA17643"/>
</dbReference>
<dbReference type="KEGG" id="syn:sll1304"/>
<dbReference type="eggNOG" id="COG1082">
    <property type="taxonomic scope" value="Bacteria"/>
</dbReference>
<dbReference type="InParanoid" id="P73599"/>
<dbReference type="PhylomeDB" id="P73599"/>
<dbReference type="Proteomes" id="UP000001425">
    <property type="component" value="Chromosome"/>
</dbReference>
<dbReference type="GO" id="GO:0016853">
    <property type="term" value="F:isomerase activity"/>
    <property type="evidence" value="ECO:0007669"/>
    <property type="project" value="UniProtKB-KW"/>
</dbReference>
<dbReference type="GO" id="GO:0046872">
    <property type="term" value="F:metal ion binding"/>
    <property type="evidence" value="ECO:0007669"/>
    <property type="project" value="UniProtKB-KW"/>
</dbReference>
<dbReference type="Gene3D" id="3.20.20.150">
    <property type="entry name" value="Divalent-metal-dependent TIM barrel enzymes"/>
    <property type="match status" value="1"/>
</dbReference>
<dbReference type="InterPro" id="IPR050417">
    <property type="entry name" value="Sugar_Epim/Isomerase"/>
</dbReference>
<dbReference type="InterPro" id="IPR036237">
    <property type="entry name" value="Xyl_isomerase-like_sf"/>
</dbReference>
<dbReference type="InterPro" id="IPR013022">
    <property type="entry name" value="Xyl_isomerase-like_TIM-brl"/>
</dbReference>
<dbReference type="PANTHER" id="PTHR43489:SF7">
    <property type="entry name" value="3-DEHYDRO-D-GULOSIDE 4-EPIMERASE-RELATED"/>
    <property type="match status" value="1"/>
</dbReference>
<dbReference type="PANTHER" id="PTHR43489">
    <property type="entry name" value="ISOMERASE"/>
    <property type="match status" value="1"/>
</dbReference>
<dbReference type="Pfam" id="PF01261">
    <property type="entry name" value="AP_endonuc_2"/>
    <property type="match status" value="1"/>
</dbReference>
<dbReference type="SUPFAM" id="SSF51658">
    <property type="entry name" value="Xylose isomerase-like"/>
    <property type="match status" value="1"/>
</dbReference>
<reference key="1">
    <citation type="journal article" date="1996" name="DNA Res.">
        <title>Sequence analysis of the genome of the unicellular cyanobacterium Synechocystis sp. strain PCC6803. II. Sequence determination of the entire genome and assignment of potential protein-coding regions.</title>
        <authorList>
            <person name="Kaneko T."/>
            <person name="Sato S."/>
            <person name="Kotani H."/>
            <person name="Tanaka A."/>
            <person name="Asamizu E."/>
            <person name="Nakamura Y."/>
            <person name="Miyajima N."/>
            <person name="Hirosawa M."/>
            <person name="Sugiura M."/>
            <person name="Sasamoto S."/>
            <person name="Kimura T."/>
            <person name="Hosouchi T."/>
            <person name="Matsuno A."/>
            <person name="Muraki A."/>
            <person name="Nakazaki N."/>
            <person name="Naruo K."/>
            <person name="Okumura S."/>
            <person name="Shimpo S."/>
            <person name="Takeuchi C."/>
            <person name="Wada T."/>
            <person name="Watanabe A."/>
            <person name="Yamada M."/>
            <person name="Yasuda M."/>
            <person name="Tabata S."/>
        </authorList>
    </citation>
    <scope>NUCLEOTIDE SEQUENCE [LARGE SCALE GENOMIC DNA]</scope>
    <source>
        <strain>ATCC 27184 / PCC 6803 / Kazusa</strain>
    </source>
</reference>
<sequence length="287" mass="32848">MISSPKIKFGVHTFIWKKEFLGNEEYVFQDAKRWGFDGIEIATHYFDQIDPLQLKSYGEKYGVELTFCTSLPRGLSLTTKDEDCWRESIAYLERAIKFCQQCGIIQLSGPFPHPVGYLSGEPLQKRENVRMQEAFKLVAETLIKTDLKFAVEPLNRFQGYALNTVAQGLELLDAVDCPQLGLLLDLFHMNIEEKDVIKAFLQASNHCFHIHACAKDRGTPGSDSFAWGHWFKALQTMDYQGWVTIESFNFEDKELANGARLWRTVAPSNEALAQDGLKFLRQTYQTN</sequence>
<comment type="function">
    <text evidence="1 2 3">Probably catalyzes the epimerization of ketopentoses and/or ketohexoses at the C3 position.</text>
</comment>
<comment type="cofactor">
    <cofactor evidence="2">
        <name>Mn(2+)</name>
        <dbReference type="ChEBI" id="CHEBI:29035"/>
    </cofactor>
    <text evidence="2">Binds 1 Mn(2+) ion per subunit.</text>
</comment>
<comment type="similarity">
    <text evidence="3">Belongs to the hyi family.</text>
</comment>
<organism>
    <name type="scientific">Synechocystis sp. (strain ATCC 27184 / PCC 6803 / Kazusa)</name>
    <dbReference type="NCBI Taxonomy" id="1111708"/>
    <lineage>
        <taxon>Bacteria</taxon>
        <taxon>Bacillati</taxon>
        <taxon>Cyanobacteriota</taxon>
        <taxon>Cyanophyceae</taxon>
        <taxon>Synechococcales</taxon>
        <taxon>Merismopediaceae</taxon>
        <taxon>Synechocystis</taxon>
    </lineage>
</organism>
<keyword id="KW-0119">Carbohydrate metabolism</keyword>
<keyword id="KW-0413">Isomerase</keyword>
<keyword id="KW-0464">Manganese</keyword>
<keyword id="KW-0479">Metal-binding</keyword>
<keyword id="KW-1185">Reference proteome</keyword>